<organism>
    <name type="scientific">Brassica napus</name>
    <name type="common">Rape</name>
    <dbReference type="NCBI Taxonomy" id="3708"/>
    <lineage>
        <taxon>Eukaryota</taxon>
        <taxon>Viridiplantae</taxon>
        <taxon>Streptophyta</taxon>
        <taxon>Embryophyta</taxon>
        <taxon>Tracheophyta</taxon>
        <taxon>Spermatophyta</taxon>
        <taxon>Magnoliopsida</taxon>
        <taxon>eudicotyledons</taxon>
        <taxon>Gunneridae</taxon>
        <taxon>Pentapetalae</taxon>
        <taxon>rosids</taxon>
        <taxon>malvids</taxon>
        <taxon>Brassicales</taxon>
        <taxon>Brassicaceae</taxon>
        <taxon>Brassiceae</taxon>
        <taxon>Brassica</taxon>
    </lineage>
</organism>
<keyword id="KW-0009">Actin-binding</keyword>
<keyword id="KW-0963">Cytoplasm</keyword>
<keyword id="KW-0206">Cytoskeleton</keyword>
<dbReference type="EMBL" id="AF315326">
    <property type="protein sequence ID" value="AAG33237.1"/>
    <property type="molecule type" value="mRNA"/>
</dbReference>
<dbReference type="RefSeq" id="XP_013667672.1">
    <property type="nucleotide sequence ID" value="XM_013812218.1"/>
</dbReference>
<dbReference type="SMR" id="Q9FUB8"/>
<dbReference type="Allergome" id="1073">
    <property type="allergen name" value="Bra n 8"/>
</dbReference>
<dbReference type="GeneID" id="106372089"/>
<dbReference type="KEGG" id="bna:106372089"/>
<dbReference type="OrthoDB" id="421374at2759"/>
<dbReference type="GO" id="GO:0005737">
    <property type="term" value="C:cytoplasm"/>
    <property type="evidence" value="ECO:0007669"/>
    <property type="project" value="UniProtKB-KW"/>
</dbReference>
<dbReference type="GO" id="GO:0005856">
    <property type="term" value="C:cytoskeleton"/>
    <property type="evidence" value="ECO:0007669"/>
    <property type="project" value="UniProtKB-SubCell"/>
</dbReference>
<dbReference type="GO" id="GO:0003779">
    <property type="term" value="F:actin binding"/>
    <property type="evidence" value="ECO:0007669"/>
    <property type="project" value="UniProtKB-KW"/>
</dbReference>
<dbReference type="CDD" id="cd00148">
    <property type="entry name" value="PROF"/>
    <property type="match status" value="1"/>
</dbReference>
<dbReference type="FunFam" id="3.30.450.30:FF:000001">
    <property type="entry name" value="Profilin"/>
    <property type="match status" value="1"/>
</dbReference>
<dbReference type="Gene3D" id="3.30.450.30">
    <property type="entry name" value="Dynein light chain 2a, cytoplasmic"/>
    <property type="match status" value="1"/>
</dbReference>
<dbReference type="InterPro" id="IPR048278">
    <property type="entry name" value="PFN"/>
</dbReference>
<dbReference type="InterPro" id="IPR005455">
    <property type="entry name" value="PFN_euk"/>
</dbReference>
<dbReference type="InterPro" id="IPR036140">
    <property type="entry name" value="PFN_sf"/>
</dbReference>
<dbReference type="InterPro" id="IPR027310">
    <property type="entry name" value="Profilin_CS"/>
</dbReference>
<dbReference type="PANTHER" id="PTHR11604">
    <property type="entry name" value="PROFILIN"/>
    <property type="match status" value="1"/>
</dbReference>
<dbReference type="PANTHER" id="PTHR11604:SF41">
    <property type="entry name" value="PROFILIN"/>
    <property type="match status" value="1"/>
</dbReference>
<dbReference type="Pfam" id="PF00235">
    <property type="entry name" value="Profilin"/>
    <property type="match status" value="1"/>
</dbReference>
<dbReference type="PRINTS" id="PR00392">
    <property type="entry name" value="PROFILIN"/>
</dbReference>
<dbReference type="PRINTS" id="PR01640">
    <property type="entry name" value="PROFILINPLNT"/>
</dbReference>
<dbReference type="SMART" id="SM00392">
    <property type="entry name" value="PROF"/>
    <property type="match status" value="1"/>
</dbReference>
<dbReference type="SUPFAM" id="SSF55770">
    <property type="entry name" value="Profilin (actin-binding protein)"/>
    <property type="match status" value="1"/>
</dbReference>
<dbReference type="PROSITE" id="PS00414">
    <property type="entry name" value="PROFILIN"/>
    <property type="match status" value="1"/>
</dbReference>
<evidence type="ECO:0000250" key="1"/>
<evidence type="ECO:0000305" key="2"/>
<name>PROF_BRANA</name>
<comment type="function">
    <text evidence="1">Binds to actin and affects the structure of the cytoskeleton. At high concentrations, profilin prevents the polymerization of actin, whereas it enhances it at low concentrations. By binding to PIP2, it inhibits the formation of IP3 and DG (By similarity).</text>
</comment>
<comment type="subunit">
    <text>Occurs in many kinds of cells as a complex with monomeric actin in a 1:1 ratio.</text>
</comment>
<comment type="subcellular location">
    <subcellularLocation>
        <location evidence="1">Cytoplasm</location>
        <location evidence="1">Cytoskeleton</location>
    </subcellularLocation>
</comment>
<comment type="similarity">
    <text evidence="2">Belongs to the profilin family.</text>
</comment>
<sequence>MSWQTYVDEHLMCDVGDGQGHHLAAAAIFGHDGSVWAQSANFPQFKGQEFANIMKDFDEPGHLAPTGLFLAGAKYMVIQGEPGAVIRGKKGAGGITIKKTGQSCVFGIYEEPVTPGQCNMVVERLGDYLIEQDL</sequence>
<proteinExistence type="evidence at transcript level"/>
<feature type="chain" id="PRO_0000199623" description="Profilin">
    <location>
        <begin position="1"/>
        <end position="134"/>
    </location>
</feature>
<reference key="1">
    <citation type="submission" date="2000-10" db="EMBL/GenBank/DDBJ databases">
        <title>Cloning and expression of profilin gene from rapeseed pollen.</title>
        <authorList>
            <person name="Ye Q."/>
            <person name="Li X.F."/>
            <person name="Xu Y."/>
            <person name="Wang J."/>
            <person name="Ling J."/>
            <person name="Chen F."/>
        </authorList>
    </citation>
    <scope>NUCLEOTIDE SEQUENCE [MRNA]</scope>
    <source>
        <tissue>Pollen</tissue>
    </source>
</reference>
<accession>Q9FUB8</accession>
<protein>
    <recommendedName>
        <fullName>Profilin</fullName>
    </recommendedName>
</protein>